<gene>
    <name evidence="1" type="primary">rpsD</name>
    <name type="ordered locus">ABSDF0447</name>
</gene>
<accession>B0VQU2</accession>
<name>RS4_ACIBS</name>
<keyword id="KW-0687">Ribonucleoprotein</keyword>
<keyword id="KW-0689">Ribosomal protein</keyword>
<keyword id="KW-0694">RNA-binding</keyword>
<keyword id="KW-0699">rRNA-binding</keyword>
<sequence>MARYIGPKCKLSRREGTDLQLKSGVKPFDVKTKKANKAPGQHGQARGGKQSEYSLQLREKQKVRRIYGVLERQFSNYYKEAARVKGATGENLLKLLESRLDNVVYRMGFGSTRAEARQLVSHRSITLNGRRVNIASIQVKAGDVIAVHEGAKQQLRIKNAIELAAQRGIPAWIEVDHSKLEGTFKAAPDRSDLPAEINESLIVELYSK</sequence>
<proteinExistence type="inferred from homology"/>
<protein>
    <recommendedName>
        <fullName evidence="1">Small ribosomal subunit protein uS4</fullName>
    </recommendedName>
    <alternativeName>
        <fullName evidence="3">30S ribosomal protein S4</fullName>
    </alternativeName>
</protein>
<feature type="chain" id="PRO_1000140671" description="Small ribosomal subunit protein uS4">
    <location>
        <begin position="1"/>
        <end position="208"/>
    </location>
</feature>
<feature type="domain" description="S4 RNA-binding" evidence="1">
    <location>
        <begin position="98"/>
        <end position="160"/>
    </location>
</feature>
<feature type="region of interest" description="Disordered" evidence="2">
    <location>
        <begin position="24"/>
        <end position="52"/>
    </location>
</feature>
<dbReference type="EMBL" id="CU468230">
    <property type="protein sequence ID" value="CAO99838.1"/>
    <property type="molecule type" value="Genomic_DNA"/>
</dbReference>
<dbReference type="SMR" id="B0VQU2"/>
<dbReference type="KEGG" id="abm:ABSDF0447"/>
<dbReference type="HOGENOM" id="CLU_092403_0_2_6"/>
<dbReference type="Proteomes" id="UP000001741">
    <property type="component" value="Chromosome"/>
</dbReference>
<dbReference type="GO" id="GO:0015935">
    <property type="term" value="C:small ribosomal subunit"/>
    <property type="evidence" value="ECO:0007669"/>
    <property type="project" value="InterPro"/>
</dbReference>
<dbReference type="GO" id="GO:0019843">
    <property type="term" value="F:rRNA binding"/>
    <property type="evidence" value="ECO:0007669"/>
    <property type="project" value="UniProtKB-UniRule"/>
</dbReference>
<dbReference type="GO" id="GO:0003735">
    <property type="term" value="F:structural constituent of ribosome"/>
    <property type="evidence" value="ECO:0007669"/>
    <property type="project" value="InterPro"/>
</dbReference>
<dbReference type="GO" id="GO:0042274">
    <property type="term" value="P:ribosomal small subunit biogenesis"/>
    <property type="evidence" value="ECO:0007669"/>
    <property type="project" value="TreeGrafter"/>
</dbReference>
<dbReference type="GO" id="GO:0006412">
    <property type="term" value="P:translation"/>
    <property type="evidence" value="ECO:0007669"/>
    <property type="project" value="UniProtKB-UniRule"/>
</dbReference>
<dbReference type="CDD" id="cd00165">
    <property type="entry name" value="S4"/>
    <property type="match status" value="1"/>
</dbReference>
<dbReference type="FunFam" id="1.10.1050.10:FF:000001">
    <property type="entry name" value="30S ribosomal protein S4"/>
    <property type="match status" value="1"/>
</dbReference>
<dbReference type="FunFam" id="3.10.290.10:FF:000001">
    <property type="entry name" value="30S ribosomal protein S4"/>
    <property type="match status" value="1"/>
</dbReference>
<dbReference type="Gene3D" id="1.10.1050.10">
    <property type="entry name" value="Ribosomal Protein S4 Delta 41, Chain A, domain 1"/>
    <property type="match status" value="1"/>
</dbReference>
<dbReference type="Gene3D" id="3.10.290.10">
    <property type="entry name" value="RNA-binding S4 domain"/>
    <property type="match status" value="1"/>
</dbReference>
<dbReference type="HAMAP" id="MF_01306_B">
    <property type="entry name" value="Ribosomal_uS4_B"/>
    <property type="match status" value="1"/>
</dbReference>
<dbReference type="InterPro" id="IPR022801">
    <property type="entry name" value="Ribosomal_uS4"/>
</dbReference>
<dbReference type="InterPro" id="IPR005709">
    <property type="entry name" value="Ribosomal_uS4_bac-type"/>
</dbReference>
<dbReference type="InterPro" id="IPR018079">
    <property type="entry name" value="Ribosomal_uS4_CS"/>
</dbReference>
<dbReference type="InterPro" id="IPR001912">
    <property type="entry name" value="Ribosomal_uS4_N"/>
</dbReference>
<dbReference type="InterPro" id="IPR002942">
    <property type="entry name" value="S4_RNA-bd"/>
</dbReference>
<dbReference type="InterPro" id="IPR036986">
    <property type="entry name" value="S4_RNA-bd_sf"/>
</dbReference>
<dbReference type="NCBIfam" id="NF003717">
    <property type="entry name" value="PRK05327.1"/>
    <property type="match status" value="1"/>
</dbReference>
<dbReference type="NCBIfam" id="TIGR01017">
    <property type="entry name" value="rpsD_bact"/>
    <property type="match status" value="1"/>
</dbReference>
<dbReference type="PANTHER" id="PTHR11831">
    <property type="entry name" value="30S 40S RIBOSOMAL PROTEIN"/>
    <property type="match status" value="1"/>
</dbReference>
<dbReference type="PANTHER" id="PTHR11831:SF4">
    <property type="entry name" value="SMALL RIBOSOMAL SUBUNIT PROTEIN US4M"/>
    <property type="match status" value="1"/>
</dbReference>
<dbReference type="Pfam" id="PF00163">
    <property type="entry name" value="Ribosomal_S4"/>
    <property type="match status" value="1"/>
</dbReference>
<dbReference type="Pfam" id="PF01479">
    <property type="entry name" value="S4"/>
    <property type="match status" value="1"/>
</dbReference>
<dbReference type="SMART" id="SM01390">
    <property type="entry name" value="Ribosomal_S4"/>
    <property type="match status" value="1"/>
</dbReference>
<dbReference type="SMART" id="SM00363">
    <property type="entry name" value="S4"/>
    <property type="match status" value="1"/>
</dbReference>
<dbReference type="SUPFAM" id="SSF55174">
    <property type="entry name" value="Alpha-L RNA-binding motif"/>
    <property type="match status" value="1"/>
</dbReference>
<dbReference type="PROSITE" id="PS00632">
    <property type="entry name" value="RIBOSOMAL_S4"/>
    <property type="match status" value="1"/>
</dbReference>
<dbReference type="PROSITE" id="PS50889">
    <property type="entry name" value="S4"/>
    <property type="match status" value="1"/>
</dbReference>
<reference key="1">
    <citation type="journal article" date="2008" name="PLoS ONE">
        <title>Comparative analysis of Acinetobacters: three genomes for three lifestyles.</title>
        <authorList>
            <person name="Vallenet D."/>
            <person name="Nordmann P."/>
            <person name="Barbe V."/>
            <person name="Poirel L."/>
            <person name="Mangenot S."/>
            <person name="Bataille E."/>
            <person name="Dossat C."/>
            <person name="Gas S."/>
            <person name="Kreimeyer A."/>
            <person name="Lenoble P."/>
            <person name="Oztas S."/>
            <person name="Poulain J."/>
            <person name="Segurens B."/>
            <person name="Robert C."/>
            <person name="Abergel C."/>
            <person name="Claverie J.-M."/>
            <person name="Raoult D."/>
            <person name="Medigue C."/>
            <person name="Weissenbach J."/>
            <person name="Cruveiller S."/>
        </authorList>
    </citation>
    <scope>NUCLEOTIDE SEQUENCE [LARGE SCALE GENOMIC DNA]</scope>
    <source>
        <strain>SDF</strain>
    </source>
</reference>
<evidence type="ECO:0000255" key="1">
    <source>
        <dbReference type="HAMAP-Rule" id="MF_01306"/>
    </source>
</evidence>
<evidence type="ECO:0000256" key="2">
    <source>
        <dbReference type="SAM" id="MobiDB-lite"/>
    </source>
</evidence>
<evidence type="ECO:0000305" key="3"/>
<organism>
    <name type="scientific">Acinetobacter baumannii (strain SDF)</name>
    <dbReference type="NCBI Taxonomy" id="509170"/>
    <lineage>
        <taxon>Bacteria</taxon>
        <taxon>Pseudomonadati</taxon>
        <taxon>Pseudomonadota</taxon>
        <taxon>Gammaproteobacteria</taxon>
        <taxon>Moraxellales</taxon>
        <taxon>Moraxellaceae</taxon>
        <taxon>Acinetobacter</taxon>
        <taxon>Acinetobacter calcoaceticus/baumannii complex</taxon>
    </lineage>
</organism>
<comment type="function">
    <text evidence="1">One of the primary rRNA binding proteins, it binds directly to 16S rRNA where it nucleates assembly of the body of the 30S subunit.</text>
</comment>
<comment type="function">
    <text evidence="1">With S5 and S12 plays an important role in translational accuracy.</text>
</comment>
<comment type="subunit">
    <text evidence="1">Part of the 30S ribosomal subunit. Contacts protein S5. The interaction surface between S4 and S5 is involved in control of translational fidelity.</text>
</comment>
<comment type="similarity">
    <text evidence="1">Belongs to the universal ribosomal protein uS4 family.</text>
</comment>